<feature type="chain" id="PRO_0000390779" description="ATP-dependent Clp protease ATP-binding subunit ClpE">
    <location>
        <begin position="1"/>
        <end position="699"/>
    </location>
</feature>
<feature type="domain" description="UVR" evidence="2">
    <location>
        <begin position="325"/>
        <end position="360"/>
    </location>
</feature>
<feature type="zinc finger region" description="C4-type">
    <location>
        <begin position="3"/>
        <end position="32"/>
    </location>
</feature>
<feature type="binding site" evidence="1">
    <location>
        <begin position="119"/>
        <end position="126"/>
    </location>
    <ligand>
        <name>ATP</name>
        <dbReference type="ChEBI" id="CHEBI:30616"/>
    </ligand>
</feature>
<feature type="binding site" evidence="1">
    <location>
        <begin position="446"/>
        <end position="453"/>
    </location>
    <ligand>
        <name>ATP</name>
        <dbReference type="ChEBI" id="CHEBI:30616"/>
    </ligand>
</feature>
<feature type="mutagenesis site" description="10% of wild-type ATPase activity." evidence="5">
    <original>CETC</original>
    <variation>SETS</variation>
    <location>
        <begin position="29"/>
        <end position="32"/>
    </location>
</feature>
<organism>
    <name type="scientific">Bacillus subtilis (strain 168)</name>
    <dbReference type="NCBI Taxonomy" id="224308"/>
    <lineage>
        <taxon>Bacteria</taxon>
        <taxon>Bacillati</taxon>
        <taxon>Bacillota</taxon>
        <taxon>Bacilli</taxon>
        <taxon>Bacillales</taxon>
        <taxon>Bacillaceae</taxon>
        <taxon>Bacillus</taxon>
    </lineage>
</organism>
<name>CLPE_BACSU</name>
<comment type="function">
    <text evidence="5">ATPase essential both for efficient CtsR-dependent gene derepression during heat stress and for rerepression. Together with ClpP, degrades the global regulator CtsR after heat shock. Is also involved in disaggregation of heat-denatured proteins. Has thus a role in overall protein quality control in response to heat stress.</text>
</comment>
<comment type="subunit">
    <text evidence="4">Interacts with ClpP.</text>
</comment>
<comment type="induction">
    <text evidence="3 4">By heat shock via the relief of repression carried out by the transcriptional regulator CtsR.</text>
</comment>
<comment type="PTM">
    <text>ClpE is a very short-lived protein, that is, at least in the soluble cell fraction, degraded mainly by ClpCP.</text>
</comment>
<comment type="disruption phenotype">
    <text evidence="5">Cells lacking this gene display a retardation of CtsR-dependent gene induction as well as a delayed restoration of the repressed stage. They also show a significant delay in disaggregation of heat-generated insoluble protein aggregates.</text>
</comment>
<comment type="similarity">
    <text evidence="6">Belongs to the ClpA/ClpB family. ClpE subfamily.</text>
</comment>
<gene>
    <name type="primary">clpE</name>
    <name type="ordered locus">BSU13700</name>
</gene>
<reference key="1">
    <citation type="journal article" date="1997" name="Nature">
        <title>The complete genome sequence of the Gram-positive bacterium Bacillus subtilis.</title>
        <authorList>
            <person name="Kunst F."/>
            <person name="Ogasawara N."/>
            <person name="Moszer I."/>
            <person name="Albertini A.M."/>
            <person name="Alloni G."/>
            <person name="Azevedo V."/>
            <person name="Bertero M.G."/>
            <person name="Bessieres P."/>
            <person name="Bolotin A."/>
            <person name="Borchert S."/>
            <person name="Borriss R."/>
            <person name="Boursier L."/>
            <person name="Brans A."/>
            <person name="Braun M."/>
            <person name="Brignell S.C."/>
            <person name="Bron S."/>
            <person name="Brouillet S."/>
            <person name="Bruschi C.V."/>
            <person name="Caldwell B."/>
            <person name="Capuano V."/>
            <person name="Carter N.M."/>
            <person name="Choi S.-K."/>
            <person name="Codani J.-J."/>
            <person name="Connerton I.F."/>
            <person name="Cummings N.J."/>
            <person name="Daniel R.A."/>
            <person name="Denizot F."/>
            <person name="Devine K.M."/>
            <person name="Duesterhoeft A."/>
            <person name="Ehrlich S.D."/>
            <person name="Emmerson P.T."/>
            <person name="Entian K.-D."/>
            <person name="Errington J."/>
            <person name="Fabret C."/>
            <person name="Ferrari E."/>
            <person name="Foulger D."/>
            <person name="Fritz C."/>
            <person name="Fujita M."/>
            <person name="Fujita Y."/>
            <person name="Fuma S."/>
            <person name="Galizzi A."/>
            <person name="Galleron N."/>
            <person name="Ghim S.-Y."/>
            <person name="Glaser P."/>
            <person name="Goffeau A."/>
            <person name="Golightly E.J."/>
            <person name="Grandi G."/>
            <person name="Guiseppi G."/>
            <person name="Guy B.J."/>
            <person name="Haga K."/>
            <person name="Haiech J."/>
            <person name="Harwood C.R."/>
            <person name="Henaut A."/>
            <person name="Hilbert H."/>
            <person name="Holsappel S."/>
            <person name="Hosono S."/>
            <person name="Hullo M.-F."/>
            <person name="Itaya M."/>
            <person name="Jones L.-M."/>
            <person name="Joris B."/>
            <person name="Karamata D."/>
            <person name="Kasahara Y."/>
            <person name="Klaerr-Blanchard M."/>
            <person name="Klein C."/>
            <person name="Kobayashi Y."/>
            <person name="Koetter P."/>
            <person name="Koningstein G."/>
            <person name="Krogh S."/>
            <person name="Kumano M."/>
            <person name="Kurita K."/>
            <person name="Lapidus A."/>
            <person name="Lardinois S."/>
            <person name="Lauber J."/>
            <person name="Lazarevic V."/>
            <person name="Lee S.-M."/>
            <person name="Levine A."/>
            <person name="Liu H."/>
            <person name="Masuda S."/>
            <person name="Mauel C."/>
            <person name="Medigue C."/>
            <person name="Medina N."/>
            <person name="Mellado R.P."/>
            <person name="Mizuno M."/>
            <person name="Moestl D."/>
            <person name="Nakai S."/>
            <person name="Noback M."/>
            <person name="Noone D."/>
            <person name="O'Reilly M."/>
            <person name="Ogawa K."/>
            <person name="Ogiwara A."/>
            <person name="Oudega B."/>
            <person name="Park S.-H."/>
            <person name="Parro V."/>
            <person name="Pohl T.M."/>
            <person name="Portetelle D."/>
            <person name="Porwollik S."/>
            <person name="Prescott A.M."/>
            <person name="Presecan E."/>
            <person name="Pujic P."/>
            <person name="Purnelle B."/>
            <person name="Rapoport G."/>
            <person name="Rey M."/>
            <person name="Reynolds S."/>
            <person name="Rieger M."/>
            <person name="Rivolta C."/>
            <person name="Rocha E."/>
            <person name="Roche B."/>
            <person name="Rose M."/>
            <person name="Sadaie Y."/>
            <person name="Sato T."/>
            <person name="Scanlan E."/>
            <person name="Schleich S."/>
            <person name="Schroeter R."/>
            <person name="Scoffone F."/>
            <person name="Sekiguchi J."/>
            <person name="Sekowska A."/>
            <person name="Seror S.J."/>
            <person name="Serror P."/>
            <person name="Shin B.-S."/>
            <person name="Soldo B."/>
            <person name="Sorokin A."/>
            <person name="Tacconi E."/>
            <person name="Takagi T."/>
            <person name="Takahashi H."/>
            <person name="Takemaru K."/>
            <person name="Takeuchi M."/>
            <person name="Tamakoshi A."/>
            <person name="Tanaka T."/>
            <person name="Terpstra P."/>
            <person name="Tognoni A."/>
            <person name="Tosato V."/>
            <person name="Uchiyama S."/>
            <person name="Vandenbol M."/>
            <person name="Vannier F."/>
            <person name="Vassarotti A."/>
            <person name="Viari A."/>
            <person name="Wambutt R."/>
            <person name="Wedler E."/>
            <person name="Wedler H."/>
            <person name="Weitzenegger T."/>
            <person name="Winters P."/>
            <person name="Wipat A."/>
            <person name="Yamamoto H."/>
            <person name="Yamane K."/>
            <person name="Yasumoto K."/>
            <person name="Yata K."/>
            <person name="Yoshida K."/>
            <person name="Yoshikawa H.-F."/>
            <person name="Zumstein E."/>
            <person name="Yoshikawa H."/>
            <person name="Danchin A."/>
        </authorList>
    </citation>
    <scope>NUCLEOTIDE SEQUENCE [LARGE SCALE GENOMIC DNA]</scope>
    <source>
        <strain>168</strain>
    </source>
</reference>
<reference key="2">
    <citation type="journal article" date="1999" name="Mol. Microbiol.">
        <title>ClpE, a novel type of HSP100 ATPase, is part of the CtsR heat shock regulon of Bacillus subtilis.</title>
        <authorList>
            <person name="Derre I."/>
            <person name="Rapoport G."/>
            <person name="Devine K."/>
            <person name="Rose M."/>
            <person name="Msadek T."/>
        </authorList>
    </citation>
    <scope>INDUCTION BY HEAT SHOCK</scope>
</reference>
<reference key="3">
    <citation type="journal article" date="2004" name="J. Bacteriol.">
        <title>Fine-tuning in regulation of Clp protein content in Bacillus subtilis.</title>
        <authorList>
            <person name="Gerth U."/>
            <person name="Kirstein J."/>
            <person name="Mostertz J."/>
            <person name="Waldminghaus T."/>
            <person name="Miethke M."/>
            <person name="Kock H."/>
            <person name="Hecker M."/>
        </authorList>
    </citation>
    <scope>INTERACTION WITH CLPP</scope>
    <scope>INDUCTION</scope>
    <scope>PTM</scope>
</reference>
<reference key="4">
    <citation type="journal article" date="2006" name="J. Bacteriol.">
        <title>Involvement of Bacillus subtilis ClpE in CtsR degradation and protein quality control.</title>
        <authorList>
            <person name="Miethke M."/>
            <person name="Hecker M."/>
            <person name="Gerth U."/>
        </authorList>
    </citation>
    <scope>FUNCTION</scope>
    <scope>DISRUPTION PHENOTYPE</scope>
    <scope>ZINC-FINGER</scope>
    <scope>MUTAGENESIS OF 29-CYS--CYS-32</scope>
    <source>
        <strain>168</strain>
    </source>
</reference>
<keyword id="KW-0067">ATP-binding</keyword>
<keyword id="KW-0143">Chaperone</keyword>
<keyword id="KW-0479">Metal-binding</keyword>
<keyword id="KW-0547">Nucleotide-binding</keyword>
<keyword id="KW-1185">Reference proteome</keyword>
<keyword id="KW-0346">Stress response</keyword>
<keyword id="KW-0862">Zinc</keyword>
<keyword id="KW-0863">Zinc-finger</keyword>
<proteinExistence type="evidence at protein level"/>
<accession>O31673</accession>
<protein>
    <recommendedName>
        <fullName>ATP-dependent Clp protease ATP-binding subunit ClpE</fullName>
    </recommendedName>
    <alternativeName>
        <fullName>ATPase ClpE</fullName>
    </alternativeName>
    <alternativeName>
        <fullName>Heat shock protein HSP1</fullName>
    </alternativeName>
</protein>
<evidence type="ECO:0000255" key="1"/>
<evidence type="ECO:0000255" key="2">
    <source>
        <dbReference type="PROSITE-ProRule" id="PRU00217"/>
    </source>
</evidence>
<evidence type="ECO:0000269" key="3">
    <source>
    </source>
</evidence>
<evidence type="ECO:0000269" key="4">
    <source>
    </source>
</evidence>
<evidence type="ECO:0000269" key="5">
    <source>
    </source>
</evidence>
<evidence type="ECO:0000305" key="6"/>
<dbReference type="EMBL" id="AL009126">
    <property type="protein sequence ID" value="CAB13243.1"/>
    <property type="molecule type" value="Genomic_DNA"/>
</dbReference>
<dbReference type="PIR" id="A69601">
    <property type="entry name" value="A69601"/>
</dbReference>
<dbReference type="RefSeq" id="NP_389253.1">
    <property type="nucleotide sequence ID" value="NC_000964.3"/>
</dbReference>
<dbReference type="RefSeq" id="WP_009967104.1">
    <property type="nucleotide sequence ID" value="NZ_OZ025638.1"/>
</dbReference>
<dbReference type="SMR" id="O31673"/>
<dbReference type="FunCoup" id="O31673">
    <property type="interactions" value="6"/>
</dbReference>
<dbReference type="STRING" id="224308.BSU13700"/>
<dbReference type="jPOST" id="O31673"/>
<dbReference type="PaxDb" id="224308-BSU13700"/>
<dbReference type="EnsemblBacteria" id="CAB13243">
    <property type="protein sequence ID" value="CAB13243"/>
    <property type="gene ID" value="BSU_13700"/>
</dbReference>
<dbReference type="GeneID" id="939289"/>
<dbReference type="KEGG" id="bsu:BSU13700"/>
<dbReference type="PATRIC" id="fig|224308.179.peg.1487"/>
<dbReference type="eggNOG" id="COG0542">
    <property type="taxonomic scope" value="Bacteria"/>
</dbReference>
<dbReference type="InParanoid" id="O31673"/>
<dbReference type="OrthoDB" id="9803641at2"/>
<dbReference type="PhylomeDB" id="O31673"/>
<dbReference type="BioCyc" id="BSUB:BSU13700-MONOMER"/>
<dbReference type="Proteomes" id="UP000001570">
    <property type="component" value="Chromosome"/>
</dbReference>
<dbReference type="GO" id="GO:0005524">
    <property type="term" value="F:ATP binding"/>
    <property type="evidence" value="ECO:0007669"/>
    <property type="project" value="UniProtKB-KW"/>
</dbReference>
<dbReference type="GO" id="GO:0016887">
    <property type="term" value="F:ATP hydrolysis activity"/>
    <property type="evidence" value="ECO:0007669"/>
    <property type="project" value="InterPro"/>
</dbReference>
<dbReference type="GO" id="GO:0008270">
    <property type="term" value="F:zinc ion binding"/>
    <property type="evidence" value="ECO:0007669"/>
    <property type="project" value="UniProtKB-KW"/>
</dbReference>
<dbReference type="CDD" id="cd00009">
    <property type="entry name" value="AAA"/>
    <property type="match status" value="1"/>
</dbReference>
<dbReference type="CDD" id="cd19499">
    <property type="entry name" value="RecA-like_ClpB_Hsp104-like"/>
    <property type="match status" value="1"/>
</dbReference>
<dbReference type="FunFam" id="3.40.50.300:FF:000025">
    <property type="entry name" value="ATP-dependent Clp protease subunit"/>
    <property type="match status" value="1"/>
</dbReference>
<dbReference type="FunFam" id="3.40.50.300:FF:000010">
    <property type="entry name" value="Chaperone clpB 1, putative"/>
    <property type="match status" value="1"/>
</dbReference>
<dbReference type="Gene3D" id="1.10.8.60">
    <property type="match status" value="2"/>
</dbReference>
<dbReference type="Gene3D" id="3.40.50.300">
    <property type="entry name" value="P-loop containing nucleotide triphosphate hydrolases"/>
    <property type="match status" value="2"/>
</dbReference>
<dbReference type="Gene3D" id="4.10.860.10">
    <property type="entry name" value="UVR domain"/>
    <property type="match status" value="1"/>
</dbReference>
<dbReference type="InterPro" id="IPR003593">
    <property type="entry name" value="AAA+_ATPase"/>
</dbReference>
<dbReference type="InterPro" id="IPR003959">
    <property type="entry name" value="ATPase_AAA_core"/>
</dbReference>
<dbReference type="InterPro" id="IPR019489">
    <property type="entry name" value="Clp_ATPase_C"/>
</dbReference>
<dbReference type="InterPro" id="IPR001270">
    <property type="entry name" value="ClpA/B"/>
</dbReference>
<dbReference type="InterPro" id="IPR018368">
    <property type="entry name" value="ClpA/B_CS1"/>
</dbReference>
<dbReference type="InterPro" id="IPR028299">
    <property type="entry name" value="ClpA/B_CS2"/>
</dbReference>
<dbReference type="InterPro" id="IPR041546">
    <property type="entry name" value="ClpA/ClpB_AAA_lid"/>
</dbReference>
<dbReference type="InterPro" id="IPR050130">
    <property type="entry name" value="ClpA_ClpB"/>
</dbReference>
<dbReference type="InterPro" id="IPR027417">
    <property type="entry name" value="P-loop_NTPase"/>
</dbReference>
<dbReference type="InterPro" id="IPR001943">
    <property type="entry name" value="UVR_dom"/>
</dbReference>
<dbReference type="PANTHER" id="PTHR11638">
    <property type="entry name" value="ATP-DEPENDENT CLP PROTEASE"/>
    <property type="match status" value="1"/>
</dbReference>
<dbReference type="PANTHER" id="PTHR11638:SF175">
    <property type="entry name" value="ATP-DEPENDENT CLP PROTEASE, ATP-BINDING SUBUNIT CLPC"/>
    <property type="match status" value="1"/>
</dbReference>
<dbReference type="Pfam" id="PF00004">
    <property type="entry name" value="AAA"/>
    <property type="match status" value="1"/>
</dbReference>
<dbReference type="Pfam" id="PF07724">
    <property type="entry name" value="AAA_2"/>
    <property type="match status" value="1"/>
</dbReference>
<dbReference type="Pfam" id="PF17871">
    <property type="entry name" value="AAA_lid_9"/>
    <property type="match status" value="1"/>
</dbReference>
<dbReference type="Pfam" id="PF10431">
    <property type="entry name" value="ClpB_D2-small"/>
    <property type="match status" value="1"/>
</dbReference>
<dbReference type="PRINTS" id="PR00300">
    <property type="entry name" value="CLPPROTEASEA"/>
</dbReference>
<dbReference type="SMART" id="SM00382">
    <property type="entry name" value="AAA"/>
    <property type="match status" value="2"/>
</dbReference>
<dbReference type="SMART" id="SM01086">
    <property type="entry name" value="ClpB_D2-small"/>
    <property type="match status" value="1"/>
</dbReference>
<dbReference type="SUPFAM" id="SSF52540">
    <property type="entry name" value="P-loop containing nucleoside triphosphate hydrolases"/>
    <property type="match status" value="2"/>
</dbReference>
<dbReference type="PROSITE" id="PS00870">
    <property type="entry name" value="CLPAB_1"/>
    <property type="match status" value="1"/>
</dbReference>
<dbReference type="PROSITE" id="PS00871">
    <property type="entry name" value="CLPAB_2"/>
    <property type="match status" value="1"/>
</dbReference>
<dbReference type="PROSITE" id="PS50151">
    <property type="entry name" value="UVR"/>
    <property type="match status" value="1"/>
</dbReference>
<sequence length="699" mass="77906">MRCQHCHQNEATIRLNMQINSVHKQMVLCETCYNELTRKPSMSMGPQSFGFPFEQAFQPKEQSAAKQSEKKGLLDELAQNITNGAKAGLIDPVIGRDDEVARVIEILNRRNKNNPVLIGEPGVGKTAIAEGLALKIAEGDVPNKLKNKELYLLDVASLVANTGIRGQFEERMKQLITELKERKNVILFIDEIHLLVGAGSAEGSMDAGNILKPALARGELQVIGATTLKEYRQIEKDAALERRFQPVMVQEPSIEQAILILQGIKDKYEAYHGVTFSDEAIKACVTLSSRYIQDRHLPDKAIDLLDEAGSKANLLIDELNDEDAAERLTAIEAEKTKALEEENYELAAKLRDEELALEKKLNSSSAHTAVTVEAEHIQEIVEQKTGIPVGKLQADEQTKMKELEAKLHERVIGQEAAVQKVAKAVRRSRAGLKSKNRPVGSFLFVGPTGVGKTELSKTLADELFGTKDAIIRLDMSEYMEKHAVSKIIGSPPGYVGHEEAGQLTEKVRRNPYSIVLLDEIEKAHPDVQHMFLQIMEDGRLTDSQGRTVSFKDTVIIMTSNAGAGEKQTKVGFQSDDSVIEEQTLIDSLSMFFKPEFLNRFDSIIEFRSLEKEHLVKIVSLLLGELEETLAERGISLNVTDEAKEKIAELGYHPSFGARPLRRTIQEWVEDEMTDLLLDNGEITSFHVILEDDKIKVRAK</sequence>